<name>POSTN_MOUSE</name>
<protein>
    <recommendedName>
        <fullName>Periostin</fullName>
        <shortName>PN</shortName>
    </recommendedName>
    <alternativeName>
        <fullName>Osteoblast-specific factor 2</fullName>
        <shortName>OSF-2</shortName>
    </alternativeName>
</protein>
<dbReference type="EMBL" id="D13664">
    <property type="protein sequence ID" value="BAA02835.1"/>
    <property type="molecule type" value="mRNA"/>
</dbReference>
<dbReference type="EMBL" id="AK030756">
    <property type="protein sequence ID" value="BAC27122.1"/>
    <property type="molecule type" value="mRNA"/>
</dbReference>
<dbReference type="EMBL" id="BC031449">
    <property type="protein sequence ID" value="AAH31449.1"/>
    <property type="molecule type" value="mRNA"/>
</dbReference>
<dbReference type="CCDS" id="CCDS17351.1">
    <molecule id="Q62009-2"/>
</dbReference>
<dbReference type="CCDS" id="CCDS57211.1">
    <molecule id="Q62009-3"/>
</dbReference>
<dbReference type="CCDS" id="CCDS57212.1">
    <molecule id="Q62009-5"/>
</dbReference>
<dbReference type="CCDS" id="CCDS89624.1">
    <molecule id="Q62009-1"/>
</dbReference>
<dbReference type="PIR" id="S36109">
    <property type="entry name" value="S36109"/>
</dbReference>
<dbReference type="RefSeq" id="NP_001185694.1">
    <molecule id="Q62009-3"/>
    <property type="nucleotide sequence ID" value="NM_001198765.1"/>
</dbReference>
<dbReference type="RefSeq" id="NP_001185695.1">
    <molecule id="Q62009-5"/>
    <property type="nucleotide sequence ID" value="NM_001198766.1"/>
</dbReference>
<dbReference type="RefSeq" id="NP_001300827.1">
    <molecule id="Q62009-4"/>
    <property type="nucleotide sequence ID" value="NM_001313898.1"/>
</dbReference>
<dbReference type="RefSeq" id="NP_001355607.1">
    <molecule id="Q62009-1"/>
    <property type="nucleotide sequence ID" value="NM_001368678.1"/>
</dbReference>
<dbReference type="RefSeq" id="NP_056599.1">
    <molecule id="Q62009-2"/>
    <property type="nucleotide sequence ID" value="NM_015784.3"/>
</dbReference>
<dbReference type="RefSeq" id="XP_006501716.1">
    <property type="nucleotide sequence ID" value="XM_006501653.2"/>
</dbReference>
<dbReference type="SMR" id="Q62009"/>
<dbReference type="BioGRID" id="206060">
    <property type="interactions" value="7"/>
</dbReference>
<dbReference type="FunCoup" id="Q62009">
    <property type="interactions" value="69"/>
</dbReference>
<dbReference type="IntAct" id="Q62009">
    <property type="interactions" value="1"/>
</dbReference>
<dbReference type="MINT" id="Q62009"/>
<dbReference type="STRING" id="10090.ENSMUSP00000072773"/>
<dbReference type="GlyCosmos" id="Q62009">
    <property type="glycosylation" value="1 site, No reported glycans"/>
</dbReference>
<dbReference type="GlyGen" id="Q62009">
    <property type="glycosylation" value="2 sites, 1 N-linked glycan (1 site), 1 O-linked glycan (1 site)"/>
</dbReference>
<dbReference type="iPTMnet" id="Q62009"/>
<dbReference type="PhosphoSitePlus" id="Q62009"/>
<dbReference type="CPTAC" id="non-CPTAC-3739"/>
<dbReference type="jPOST" id="Q62009"/>
<dbReference type="PaxDb" id="10090-ENSMUSP00000072773"/>
<dbReference type="PeptideAtlas" id="Q62009"/>
<dbReference type="ProteomicsDB" id="289364">
    <molecule id="Q62009-1"/>
</dbReference>
<dbReference type="ProteomicsDB" id="289365">
    <molecule id="Q62009-2"/>
</dbReference>
<dbReference type="ProteomicsDB" id="289366">
    <molecule id="Q62009-3"/>
</dbReference>
<dbReference type="ProteomicsDB" id="289367">
    <molecule id="Q62009-4"/>
</dbReference>
<dbReference type="ProteomicsDB" id="289368">
    <molecule id="Q62009-5"/>
</dbReference>
<dbReference type="Pumba" id="Q62009"/>
<dbReference type="Antibodypedia" id="2020">
    <property type="antibodies" value="727 antibodies from 46 providers"/>
</dbReference>
<dbReference type="DNASU" id="50706"/>
<dbReference type="Ensembl" id="ENSMUST00000073012.13">
    <molecule id="Q62009-2"/>
    <property type="protein sequence ID" value="ENSMUSP00000072773.7"/>
    <property type="gene ID" value="ENSMUSG00000027750.17"/>
</dbReference>
<dbReference type="Ensembl" id="ENSMUST00000081564.13">
    <molecule id="Q62009-1"/>
    <property type="protein sequence ID" value="ENSMUSP00000080276.7"/>
    <property type="gene ID" value="ENSMUSG00000027750.17"/>
</dbReference>
<dbReference type="Ensembl" id="ENSMUST00000107985.10">
    <molecule id="Q62009-3"/>
    <property type="protein sequence ID" value="ENSMUSP00000103619.4"/>
    <property type="gene ID" value="ENSMUSG00000027750.17"/>
</dbReference>
<dbReference type="Ensembl" id="ENSMUST00000117373.8">
    <molecule id="Q62009-5"/>
    <property type="protein sequence ID" value="ENSMUSP00000112735.2"/>
    <property type="gene ID" value="ENSMUSG00000027750.17"/>
</dbReference>
<dbReference type="GeneID" id="50706"/>
<dbReference type="KEGG" id="mmu:50706"/>
<dbReference type="UCSC" id="uc008pfh.2">
    <molecule id="Q62009-2"/>
    <property type="organism name" value="mouse"/>
</dbReference>
<dbReference type="UCSC" id="uc008pfi.2">
    <molecule id="Q62009-3"/>
    <property type="organism name" value="mouse"/>
</dbReference>
<dbReference type="UCSC" id="uc008pfj.2">
    <molecule id="Q62009-5"/>
    <property type="organism name" value="mouse"/>
</dbReference>
<dbReference type="AGR" id="MGI:1926321"/>
<dbReference type="CTD" id="10631"/>
<dbReference type="MGI" id="MGI:1926321">
    <property type="gene designation" value="Postn"/>
</dbReference>
<dbReference type="VEuPathDB" id="HostDB:ENSMUSG00000027750"/>
<dbReference type="eggNOG" id="KOG1437">
    <property type="taxonomic scope" value="Eukaryota"/>
</dbReference>
<dbReference type="GeneTree" id="ENSGT00530000063860"/>
<dbReference type="HOGENOM" id="CLU_017611_0_0_1"/>
<dbReference type="InParanoid" id="Q62009"/>
<dbReference type="OMA" id="QWLSYHI"/>
<dbReference type="OrthoDB" id="7700931at2759"/>
<dbReference type="PhylomeDB" id="Q62009"/>
<dbReference type="TreeFam" id="TF316269"/>
<dbReference type="BioGRID-ORCS" id="50706">
    <property type="hits" value="1 hit in 78 CRISPR screens"/>
</dbReference>
<dbReference type="ChiTaRS" id="Postn">
    <property type="organism name" value="mouse"/>
</dbReference>
<dbReference type="PRO" id="PR:Q62009"/>
<dbReference type="Proteomes" id="UP000000589">
    <property type="component" value="Chromosome 3"/>
</dbReference>
<dbReference type="RNAct" id="Q62009">
    <property type="molecule type" value="protein"/>
</dbReference>
<dbReference type="Bgee" id="ENSMUSG00000027750">
    <property type="expression patterns" value="Expressed in secondary palatal shelf and 262 other cell types or tissues"/>
</dbReference>
<dbReference type="ExpressionAtlas" id="Q62009">
    <property type="expression patterns" value="baseline and differential"/>
</dbReference>
<dbReference type="GO" id="GO:0062023">
    <property type="term" value="C:collagen-containing extracellular matrix"/>
    <property type="evidence" value="ECO:0007005"/>
    <property type="project" value="BHF-UCL"/>
</dbReference>
<dbReference type="GO" id="GO:0031012">
    <property type="term" value="C:extracellular matrix"/>
    <property type="evidence" value="ECO:0000314"/>
    <property type="project" value="UniProtKB"/>
</dbReference>
<dbReference type="GO" id="GO:0005615">
    <property type="term" value="C:extracellular space"/>
    <property type="evidence" value="ECO:0007005"/>
    <property type="project" value="BHF-UCL"/>
</dbReference>
<dbReference type="GO" id="GO:0031594">
    <property type="term" value="C:neuromuscular junction"/>
    <property type="evidence" value="ECO:0007669"/>
    <property type="project" value="Ensembl"/>
</dbReference>
<dbReference type="GO" id="GO:0005802">
    <property type="term" value="C:trans-Golgi network"/>
    <property type="evidence" value="ECO:0007669"/>
    <property type="project" value="Ensembl"/>
</dbReference>
<dbReference type="GO" id="GO:0008201">
    <property type="term" value="F:heparin binding"/>
    <property type="evidence" value="ECO:0000314"/>
    <property type="project" value="UniProtKB"/>
</dbReference>
<dbReference type="GO" id="GO:0046872">
    <property type="term" value="F:metal ion binding"/>
    <property type="evidence" value="ECO:0000250"/>
    <property type="project" value="UniProtKB"/>
</dbReference>
<dbReference type="GO" id="GO:1990523">
    <property type="term" value="P:bone regeneration"/>
    <property type="evidence" value="ECO:0007669"/>
    <property type="project" value="Ensembl"/>
</dbReference>
<dbReference type="GO" id="GO:0007155">
    <property type="term" value="P:cell adhesion"/>
    <property type="evidence" value="ECO:0000314"/>
    <property type="project" value="UniProtKB"/>
</dbReference>
<dbReference type="GO" id="GO:0044344">
    <property type="term" value="P:cellular response to fibroblast growth factor stimulus"/>
    <property type="evidence" value="ECO:0007669"/>
    <property type="project" value="Ensembl"/>
</dbReference>
<dbReference type="GO" id="GO:0071560">
    <property type="term" value="P:cellular response to transforming growth factor beta stimulus"/>
    <property type="evidence" value="ECO:0007669"/>
    <property type="project" value="Ensembl"/>
</dbReference>
<dbReference type="GO" id="GO:0071356">
    <property type="term" value="P:cellular response to tumor necrosis factor"/>
    <property type="evidence" value="ECO:0007669"/>
    <property type="project" value="Ensembl"/>
</dbReference>
<dbReference type="GO" id="GO:0071307">
    <property type="term" value="P:cellular response to vitamin K"/>
    <property type="evidence" value="ECO:0000314"/>
    <property type="project" value="UniProtKB"/>
</dbReference>
<dbReference type="GO" id="GO:0030198">
    <property type="term" value="P:extracellular matrix organization"/>
    <property type="evidence" value="ECO:0000315"/>
    <property type="project" value="MGI"/>
</dbReference>
<dbReference type="GO" id="GO:0001953">
    <property type="term" value="P:negative regulation of cell-matrix adhesion"/>
    <property type="evidence" value="ECO:0007669"/>
    <property type="project" value="Ensembl"/>
</dbReference>
<dbReference type="GO" id="GO:1900025">
    <property type="term" value="P:negative regulation of substrate adhesion-dependent cell spreading"/>
    <property type="evidence" value="ECO:0007669"/>
    <property type="project" value="Ensembl"/>
</dbReference>
<dbReference type="GO" id="GO:1990138">
    <property type="term" value="P:neuron projection extension"/>
    <property type="evidence" value="ECO:0007669"/>
    <property type="project" value="Ensembl"/>
</dbReference>
<dbReference type="GO" id="GO:2000343">
    <property type="term" value="P:positive regulation of chemokine (C-X-C motif) ligand 2 production"/>
    <property type="evidence" value="ECO:0007669"/>
    <property type="project" value="Ensembl"/>
</dbReference>
<dbReference type="GO" id="GO:0014911">
    <property type="term" value="P:positive regulation of smooth muscle cell migration"/>
    <property type="evidence" value="ECO:0007669"/>
    <property type="project" value="Ensembl"/>
</dbReference>
<dbReference type="GO" id="GO:0008593">
    <property type="term" value="P:regulation of Notch signaling pathway"/>
    <property type="evidence" value="ECO:0000315"/>
    <property type="project" value="MGI"/>
</dbReference>
<dbReference type="GO" id="GO:0003073">
    <property type="term" value="P:regulation of systemic arterial blood pressure"/>
    <property type="evidence" value="ECO:0007669"/>
    <property type="project" value="Ensembl"/>
</dbReference>
<dbReference type="GO" id="GO:0032355">
    <property type="term" value="P:response to estradiol"/>
    <property type="evidence" value="ECO:0007669"/>
    <property type="project" value="Ensembl"/>
</dbReference>
<dbReference type="GO" id="GO:0001666">
    <property type="term" value="P:response to hypoxia"/>
    <property type="evidence" value="ECO:0007669"/>
    <property type="project" value="Ensembl"/>
</dbReference>
<dbReference type="GO" id="GO:0009612">
    <property type="term" value="P:response to mechanical stimulus"/>
    <property type="evidence" value="ECO:0007669"/>
    <property type="project" value="Ensembl"/>
</dbReference>
<dbReference type="GO" id="GO:0014850">
    <property type="term" value="P:response to muscle activity"/>
    <property type="evidence" value="ECO:0007669"/>
    <property type="project" value="Ensembl"/>
</dbReference>
<dbReference type="GO" id="GO:0009888">
    <property type="term" value="P:tissue development"/>
    <property type="evidence" value="ECO:0000315"/>
    <property type="project" value="MGI"/>
</dbReference>
<dbReference type="FunFam" id="2.30.180.10:FF:000001">
    <property type="entry name" value="periostin isoform X1"/>
    <property type="match status" value="1"/>
</dbReference>
<dbReference type="FunFam" id="2.30.180.10:FF:000002">
    <property type="entry name" value="periostin isoform X1"/>
    <property type="match status" value="1"/>
</dbReference>
<dbReference type="FunFam" id="2.30.180.10:FF:000003">
    <property type="entry name" value="periostin isoform X1"/>
    <property type="match status" value="1"/>
</dbReference>
<dbReference type="FunFam" id="2.30.180.10:FF:000004">
    <property type="entry name" value="periostin isoform X1"/>
    <property type="match status" value="1"/>
</dbReference>
<dbReference type="Gene3D" id="2.30.180.10">
    <property type="entry name" value="FAS1 domain"/>
    <property type="match status" value="4"/>
</dbReference>
<dbReference type="InterPro" id="IPR050904">
    <property type="entry name" value="Adhesion/Biosynth-related"/>
</dbReference>
<dbReference type="InterPro" id="IPR011489">
    <property type="entry name" value="EMI_domain"/>
</dbReference>
<dbReference type="InterPro" id="IPR036378">
    <property type="entry name" value="FAS1_dom_sf"/>
</dbReference>
<dbReference type="InterPro" id="IPR000782">
    <property type="entry name" value="FAS1_domain"/>
</dbReference>
<dbReference type="InterPro" id="IPR016666">
    <property type="entry name" value="TGFBI/POSTN"/>
</dbReference>
<dbReference type="PANTHER" id="PTHR10900:SF12">
    <property type="entry name" value="PERIOSTIN"/>
    <property type="match status" value="1"/>
</dbReference>
<dbReference type="PANTHER" id="PTHR10900">
    <property type="entry name" value="PERIOSTIN-RELATED"/>
    <property type="match status" value="1"/>
</dbReference>
<dbReference type="Pfam" id="PF02469">
    <property type="entry name" value="Fasciclin"/>
    <property type="match status" value="4"/>
</dbReference>
<dbReference type="PIRSF" id="PIRSF016553">
    <property type="entry name" value="BIGH3_OSF2"/>
    <property type="match status" value="1"/>
</dbReference>
<dbReference type="SMART" id="SM00554">
    <property type="entry name" value="FAS1"/>
    <property type="match status" value="4"/>
</dbReference>
<dbReference type="SUPFAM" id="SSF82153">
    <property type="entry name" value="FAS1 domain"/>
    <property type="match status" value="4"/>
</dbReference>
<dbReference type="PROSITE" id="PS51041">
    <property type="entry name" value="EMI"/>
    <property type="match status" value="1"/>
</dbReference>
<dbReference type="PROSITE" id="PS50213">
    <property type="entry name" value="FAS1"/>
    <property type="match status" value="4"/>
</dbReference>
<evidence type="ECO:0000250" key="1">
    <source>
        <dbReference type="UniProtKB" id="Q15063"/>
    </source>
</evidence>
<evidence type="ECO:0000255" key="2"/>
<evidence type="ECO:0000255" key="3">
    <source>
        <dbReference type="PROSITE-ProRule" id="PRU00082"/>
    </source>
</evidence>
<evidence type="ECO:0000255" key="4">
    <source>
        <dbReference type="PROSITE-ProRule" id="PRU00384"/>
    </source>
</evidence>
<evidence type="ECO:0000256" key="5">
    <source>
        <dbReference type="SAM" id="MobiDB-lite"/>
    </source>
</evidence>
<evidence type="ECO:0000269" key="6">
    <source>
    </source>
</evidence>
<evidence type="ECO:0000269" key="7">
    <source>
    </source>
</evidence>
<evidence type="ECO:0000269" key="8">
    <source>
    </source>
</evidence>
<evidence type="ECO:0000269" key="9">
    <source>
    </source>
</evidence>
<evidence type="ECO:0000269" key="10">
    <source>
    </source>
</evidence>
<evidence type="ECO:0000303" key="11">
    <source>
    </source>
</evidence>
<evidence type="ECO:0000303" key="12">
    <source>
    </source>
</evidence>
<evidence type="ECO:0000303" key="13">
    <source>
    </source>
</evidence>
<evidence type="ECO:0000303" key="14">
    <source>
    </source>
</evidence>
<evidence type="ECO:0000303" key="15">
    <source>
    </source>
</evidence>
<evidence type="ECO:0000305" key="16"/>
<evidence type="ECO:0000312" key="17">
    <source>
        <dbReference type="EMBL" id="AAH31449.1"/>
    </source>
</evidence>
<feature type="signal peptide" evidence="2">
    <location>
        <begin position="1"/>
        <end position="23"/>
    </location>
</feature>
<feature type="chain" id="PRO_0000008790" description="Periostin">
    <location>
        <begin position="24"/>
        <end position="838"/>
    </location>
</feature>
<feature type="domain" description="EMI" evidence="4">
    <location>
        <begin position="42"/>
        <end position="96"/>
    </location>
</feature>
<feature type="domain" description="FAS1 1" evidence="3">
    <location>
        <begin position="99"/>
        <end position="232"/>
    </location>
</feature>
<feature type="domain" description="FAS1 2" evidence="3">
    <location>
        <begin position="236"/>
        <end position="367"/>
    </location>
</feature>
<feature type="domain" description="FAS1 3" evidence="3">
    <location>
        <begin position="370"/>
        <end position="494"/>
    </location>
</feature>
<feature type="domain" description="FAS1 4" evidence="3">
    <location>
        <begin position="498"/>
        <end position="630"/>
    </location>
</feature>
<feature type="region of interest" description="Disordered" evidence="5">
    <location>
        <begin position="811"/>
        <end position="838"/>
    </location>
</feature>
<feature type="compositionally biased region" description="Basic residues" evidence="5">
    <location>
        <begin position="826"/>
        <end position="838"/>
    </location>
</feature>
<feature type="modified residue" description="S-cysteinyl cysteine" evidence="1">
    <location>
        <position position="62"/>
    </location>
</feature>
<feature type="glycosylation site" description="N-linked (GlcNAc...) asparagine" evidence="14">
    <location>
        <position position="601"/>
    </location>
</feature>
<feature type="disulfide bond" evidence="1">
    <location>
        <begin position="46"/>
        <end position="82"/>
    </location>
</feature>
<feature type="disulfide bond" evidence="1">
    <location>
        <begin position="71"/>
        <end position="335"/>
    </location>
</feature>
<feature type="disulfide bond" evidence="1">
    <location>
        <begin position="81"/>
        <end position="94"/>
    </location>
</feature>
<feature type="disulfide bond" evidence="1">
    <location>
        <begin position="210"/>
        <end position="313"/>
    </location>
</feature>
<feature type="disulfide bond" evidence="1">
    <location>
        <begin position="469"/>
        <end position="474"/>
    </location>
</feature>
<feature type="splice variant" id="VSP_050666" description="In isoform 2 and isoform 5." evidence="11 12 15">
    <original>TTKIITKVVEPKIKVIQGSLQPIIKTEG</original>
    <variation>R</variation>
    <location>
        <begin position="672"/>
        <end position="699"/>
    </location>
</feature>
<feature type="splice variant" id="VSP_050667" description="In isoform 4." evidence="11">
    <location>
        <begin position="759"/>
        <end position="812"/>
    </location>
</feature>
<feature type="splice variant" id="VSP_050668" description="In isoform 3 and isoform 5." evidence="11 12 13">
    <location>
        <begin position="785"/>
        <end position="812"/>
    </location>
</feature>
<feature type="sequence conflict" description="In Ref. 2; BAC27122." evidence="16" ref="2">
    <original>K</original>
    <variation>R</variation>
    <location>
        <position position="346"/>
    </location>
</feature>
<feature type="sequence conflict" description="In Ref. 2; BAC27122." evidence="16" ref="2">
    <original>D</original>
    <variation>N</variation>
    <location>
        <position position="541"/>
    </location>
</feature>
<gene>
    <name type="primary">Postn</name>
    <name type="synonym">Osf2</name>
</gene>
<reference evidence="16" key="1">
    <citation type="journal article" date="1993" name="Biochem. J.">
        <title>Osteoblast-specific factor 2: cloning of a putative bone adhesion protein with homology with the insect protein fasciclin I.</title>
        <authorList>
            <person name="Takeshita S."/>
            <person name="Kikuno R."/>
            <person name="Tezuka K."/>
            <person name="Amann E."/>
        </authorList>
    </citation>
    <scope>NUCLEOTIDE SEQUENCE [MRNA] (ISOFORM 2)</scope>
    <source>
        <strain evidence="10">C57BL/6J</strain>
        <tissue evidence="10">Calvaria</tissue>
    </source>
</reference>
<reference key="2">
    <citation type="journal article" date="2005" name="Science">
        <title>The transcriptional landscape of the mammalian genome.</title>
        <authorList>
            <person name="Carninci P."/>
            <person name="Kasukawa T."/>
            <person name="Katayama S."/>
            <person name="Gough J."/>
            <person name="Frith M.C."/>
            <person name="Maeda N."/>
            <person name="Oyama R."/>
            <person name="Ravasi T."/>
            <person name="Lenhard B."/>
            <person name="Wells C."/>
            <person name="Kodzius R."/>
            <person name="Shimokawa K."/>
            <person name="Bajic V.B."/>
            <person name="Brenner S.E."/>
            <person name="Batalov S."/>
            <person name="Forrest A.R."/>
            <person name="Zavolan M."/>
            <person name="Davis M.J."/>
            <person name="Wilming L.G."/>
            <person name="Aidinis V."/>
            <person name="Allen J.E."/>
            <person name="Ambesi-Impiombato A."/>
            <person name="Apweiler R."/>
            <person name="Aturaliya R.N."/>
            <person name="Bailey T.L."/>
            <person name="Bansal M."/>
            <person name="Baxter L."/>
            <person name="Beisel K.W."/>
            <person name="Bersano T."/>
            <person name="Bono H."/>
            <person name="Chalk A.M."/>
            <person name="Chiu K.P."/>
            <person name="Choudhary V."/>
            <person name="Christoffels A."/>
            <person name="Clutterbuck D.R."/>
            <person name="Crowe M.L."/>
            <person name="Dalla E."/>
            <person name="Dalrymple B.P."/>
            <person name="de Bono B."/>
            <person name="Della Gatta G."/>
            <person name="di Bernardo D."/>
            <person name="Down T."/>
            <person name="Engstrom P."/>
            <person name="Fagiolini M."/>
            <person name="Faulkner G."/>
            <person name="Fletcher C.F."/>
            <person name="Fukushima T."/>
            <person name="Furuno M."/>
            <person name="Futaki S."/>
            <person name="Gariboldi M."/>
            <person name="Georgii-Hemming P."/>
            <person name="Gingeras T.R."/>
            <person name="Gojobori T."/>
            <person name="Green R.E."/>
            <person name="Gustincich S."/>
            <person name="Harbers M."/>
            <person name="Hayashi Y."/>
            <person name="Hensch T.K."/>
            <person name="Hirokawa N."/>
            <person name="Hill D."/>
            <person name="Huminiecki L."/>
            <person name="Iacono M."/>
            <person name="Ikeo K."/>
            <person name="Iwama A."/>
            <person name="Ishikawa T."/>
            <person name="Jakt M."/>
            <person name="Kanapin A."/>
            <person name="Katoh M."/>
            <person name="Kawasawa Y."/>
            <person name="Kelso J."/>
            <person name="Kitamura H."/>
            <person name="Kitano H."/>
            <person name="Kollias G."/>
            <person name="Krishnan S.P."/>
            <person name="Kruger A."/>
            <person name="Kummerfeld S.K."/>
            <person name="Kurochkin I.V."/>
            <person name="Lareau L.F."/>
            <person name="Lazarevic D."/>
            <person name="Lipovich L."/>
            <person name="Liu J."/>
            <person name="Liuni S."/>
            <person name="McWilliam S."/>
            <person name="Madan Babu M."/>
            <person name="Madera M."/>
            <person name="Marchionni L."/>
            <person name="Matsuda H."/>
            <person name="Matsuzawa S."/>
            <person name="Miki H."/>
            <person name="Mignone F."/>
            <person name="Miyake S."/>
            <person name="Morris K."/>
            <person name="Mottagui-Tabar S."/>
            <person name="Mulder N."/>
            <person name="Nakano N."/>
            <person name="Nakauchi H."/>
            <person name="Ng P."/>
            <person name="Nilsson R."/>
            <person name="Nishiguchi S."/>
            <person name="Nishikawa S."/>
            <person name="Nori F."/>
            <person name="Ohara O."/>
            <person name="Okazaki Y."/>
            <person name="Orlando V."/>
            <person name="Pang K.C."/>
            <person name="Pavan W.J."/>
            <person name="Pavesi G."/>
            <person name="Pesole G."/>
            <person name="Petrovsky N."/>
            <person name="Piazza S."/>
            <person name="Reed J."/>
            <person name="Reid J.F."/>
            <person name="Ring B.Z."/>
            <person name="Ringwald M."/>
            <person name="Rost B."/>
            <person name="Ruan Y."/>
            <person name="Salzberg S.L."/>
            <person name="Sandelin A."/>
            <person name="Schneider C."/>
            <person name="Schoenbach C."/>
            <person name="Sekiguchi K."/>
            <person name="Semple C.A."/>
            <person name="Seno S."/>
            <person name="Sessa L."/>
            <person name="Sheng Y."/>
            <person name="Shibata Y."/>
            <person name="Shimada H."/>
            <person name="Shimada K."/>
            <person name="Silva D."/>
            <person name="Sinclair B."/>
            <person name="Sperling S."/>
            <person name="Stupka E."/>
            <person name="Sugiura K."/>
            <person name="Sultana R."/>
            <person name="Takenaka Y."/>
            <person name="Taki K."/>
            <person name="Tammoja K."/>
            <person name="Tan S.L."/>
            <person name="Tang S."/>
            <person name="Taylor M.S."/>
            <person name="Tegner J."/>
            <person name="Teichmann S.A."/>
            <person name="Ueda H.R."/>
            <person name="van Nimwegen E."/>
            <person name="Verardo R."/>
            <person name="Wei C.L."/>
            <person name="Yagi K."/>
            <person name="Yamanishi H."/>
            <person name="Zabarovsky E."/>
            <person name="Zhu S."/>
            <person name="Zimmer A."/>
            <person name="Hide W."/>
            <person name="Bult C."/>
            <person name="Grimmond S.M."/>
            <person name="Teasdale R.D."/>
            <person name="Liu E.T."/>
            <person name="Brusic V."/>
            <person name="Quackenbush J."/>
            <person name="Wahlestedt C."/>
            <person name="Mattick J.S."/>
            <person name="Hume D.A."/>
            <person name="Kai C."/>
            <person name="Sasaki D."/>
            <person name="Tomaru Y."/>
            <person name="Fukuda S."/>
            <person name="Kanamori-Katayama M."/>
            <person name="Suzuki M."/>
            <person name="Aoki J."/>
            <person name="Arakawa T."/>
            <person name="Iida J."/>
            <person name="Imamura K."/>
            <person name="Itoh M."/>
            <person name="Kato T."/>
            <person name="Kawaji H."/>
            <person name="Kawagashira N."/>
            <person name="Kawashima T."/>
            <person name="Kojima M."/>
            <person name="Kondo S."/>
            <person name="Konno H."/>
            <person name="Nakano K."/>
            <person name="Ninomiya N."/>
            <person name="Nishio T."/>
            <person name="Okada M."/>
            <person name="Plessy C."/>
            <person name="Shibata K."/>
            <person name="Shiraki T."/>
            <person name="Suzuki S."/>
            <person name="Tagami M."/>
            <person name="Waki K."/>
            <person name="Watahiki A."/>
            <person name="Okamura-Oho Y."/>
            <person name="Suzuki H."/>
            <person name="Kawai J."/>
            <person name="Hayashizaki Y."/>
        </authorList>
    </citation>
    <scope>NUCLEOTIDE SEQUENCE [LARGE SCALE MRNA] (ISOFORM 3)</scope>
    <source>
        <strain>C57BL/6J</strain>
    </source>
</reference>
<reference evidence="16" key="3">
    <citation type="journal article" date="2004" name="Genome Res.">
        <title>The status, quality, and expansion of the NIH full-length cDNA project: the Mammalian Gene Collection (MGC).</title>
        <authorList>
            <consortium name="The MGC Project Team"/>
        </authorList>
    </citation>
    <scope>NUCLEOTIDE SEQUENCE [LARGE SCALE MRNA] (ISOFORM 5)</scope>
    <source>
        <tissue evidence="17">Mammary gland</tissue>
    </source>
</reference>
<reference evidence="16" key="4">
    <citation type="journal article" date="1999" name="J. Bone Miner. Res.">
        <title>Identification and characterization of a novel protein, periostin, with restricted expression to periosteum and periodontal ligament and increased expression by transforming growth factor beta.</title>
        <authorList>
            <person name="Horiuchi K."/>
            <person name="Amizuka N."/>
            <person name="Takeshita S."/>
            <person name="Takamatsu H."/>
            <person name="Katsuura M."/>
            <person name="Ozawa H."/>
            <person name="Toyama Y."/>
            <person name="Bonewald L.F."/>
            <person name="Kudo A."/>
        </authorList>
    </citation>
    <scope>PARTIAL NUCLEOTIDE SEQUENCE (ISOFORMS 1; 2; 3 AND 4)</scope>
    <scope>FUNCTION</scope>
    <scope>SUBCELLULAR LOCATION</scope>
    <scope>TISSUE SPECIFICITY</scope>
    <scope>INDUCTION</scope>
</reference>
<reference evidence="16" key="5">
    <citation type="journal article" date="1995" name="Protein Expr. Purif.">
        <title>Expression and characterization of murine osteoblast-specific factor 2 (OSF-2) in a baculovirus expression system.</title>
        <authorList>
            <person name="Sugiura T."/>
            <person name="Takamatsu H."/>
            <person name="Kudo A."/>
            <person name="Amann E."/>
        </authorList>
    </citation>
    <scope>HEPARIN-BINDING ACTIVITY</scope>
    <scope>GLYCOSYLATION</scope>
</reference>
<reference evidence="16" key="6">
    <citation type="journal article" date="2001" name="Mech. Dev.">
        <title>Periostin (an osteoblast-specific factor) is expressed within the embryonic mouse heart during valve formation.</title>
        <authorList>
            <person name="Kruzynska-Frejtag A."/>
            <person name="Machnicki M."/>
            <person name="Rogers R."/>
            <person name="Markwald R.R."/>
            <person name="Conway S.J."/>
        </authorList>
    </citation>
    <scope>TISSUE SPECIFICITY</scope>
    <scope>DEVELOPMENTAL STAGE</scope>
</reference>
<reference key="7">
    <citation type="journal article" date="2008" name="J. Biol. Chem.">
        <title>Periostin, a member of a novel family of vitamin K-dependent proteins, is expressed by mesenchymal stromal cells.</title>
        <authorList>
            <person name="Coutu D.L."/>
            <person name="Wu J.H."/>
            <person name="Monette A."/>
            <person name="Rivard G.-E."/>
            <person name="Blostein M.D."/>
            <person name="Galipeau J."/>
        </authorList>
    </citation>
    <scope>GAMMA-CARBOXYGLUTAMATION</scope>
    <scope>SUBCELLULAR LOCATION</scope>
    <scope>IDENTIFICATION BY MASS SPECTROMETRY</scope>
</reference>
<reference key="8">
    <citation type="journal article" date="2010" name="Cell">
        <title>A tissue-specific atlas of mouse protein phosphorylation and expression.</title>
        <authorList>
            <person name="Huttlin E.L."/>
            <person name="Jedrychowski M.P."/>
            <person name="Elias J.E."/>
            <person name="Goswami T."/>
            <person name="Rad R."/>
            <person name="Beausoleil S.A."/>
            <person name="Villen J."/>
            <person name="Haas W."/>
            <person name="Sowa M.E."/>
            <person name="Gygi S.P."/>
        </authorList>
    </citation>
    <scope>IDENTIFICATION BY MASS SPECTROMETRY [LARGE SCALE ANALYSIS]</scope>
    <source>
        <tissue>Brown adipose tissue</tissue>
        <tissue>Heart</tissue>
        <tissue>Kidney</tissue>
        <tissue>Lung</tissue>
        <tissue>Pancreas</tissue>
    </source>
</reference>
<reference key="9">
    <citation type="journal article" date="2010" name="J. Biol. Chem.">
        <title>Interaction between periostin and BMP-1 promotes proteolytic activation of lysyl oxidase.</title>
        <authorList>
            <person name="Maruhashi T."/>
            <person name="Kii I."/>
            <person name="Saito M."/>
            <person name="Kudo A."/>
        </authorList>
    </citation>
    <scope>FUNCTION</scope>
    <scope>INTERACTION WITH BMP1 AND FIBRONECTIN</scope>
    <scope>DISRUPTION PHENOTYPE</scope>
    <scope>SUBCELLULAR LOCATION</scope>
</reference>
<comment type="function">
    <text evidence="6 9">Induces cell attachment and spreading and plays a role in cell adhesion (PubMed:10404027). Enhances incorporation of BMP1 in the fibronectin matrix of connective tissues, and subsequent proteolytic activation of lysyl oxidase LOX (PubMed:20181949).</text>
</comment>
<comment type="subunit">
    <text evidence="1 9">Homodimer (By similarity). Interacts with BMP1 and fibronectin (PubMed:20181949).</text>
</comment>
<comment type="subcellular location">
    <subcellularLocation>
        <location evidence="9">Golgi apparatus</location>
    </subcellularLocation>
    <subcellularLocation>
        <location evidence="6 8">Secreted</location>
    </subcellularLocation>
    <subcellularLocation>
        <location evidence="6">Secreted</location>
        <location evidence="6">Extracellular space</location>
        <location evidence="6">Extracellular matrix</location>
    </subcellularLocation>
    <text evidence="9">Colocalizes with BMP1 in the Golgi (PubMed:20181949).</text>
</comment>
<comment type="alternative products">
    <event type="alternative splicing"/>
    <isoform>
        <id>Q62009-1</id>
        <name evidence="6">1</name>
        <sequence type="displayed"/>
    </isoform>
    <isoform>
        <id>Q62009-2</id>
        <name evidence="6">2</name>
        <sequence type="described" ref="VSP_050666"/>
    </isoform>
    <isoform>
        <id>Q62009-3</id>
        <name evidence="6">3</name>
        <sequence type="described" ref="VSP_050668"/>
    </isoform>
    <isoform>
        <id>Q62009-4</id>
        <name evidence="6">4</name>
        <sequence type="described" ref="VSP_050667"/>
    </isoform>
    <isoform>
        <id>Q62009-5</id>
        <name evidence="16">5</name>
        <sequence type="described" ref="VSP_050666 VSP_050668"/>
    </isoform>
</comment>
<comment type="tissue specificity">
    <text evidence="6 7">Preferentially expressed in periosteum and periodontal ligament (PubMed:10404027). Also expressed in the developing and adult heart (PubMed:11335131).</text>
</comment>
<comment type="developmental stage">
    <text evidence="7">In the heart, expressed from embryonic day 10.5. Continues to be strongly expressed throughout cardiac development and into adulthood (PubMed:11335131).</text>
</comment>
<comment type="induction">
    <text evidence="7">By TGF-beta (PubMed:11335131).</text>
</comment>
<comment type="PTM">
    <text evidence="1 8">Gamma-carboxylation is controversial. Gamma-carboxyglutamated; gamma-carboxyglutamate residues are formed by vitamin K dependent carboxylation; these residues may be required for binding to calcium (PubMed:18450759). According to a more recent report in human, does not contain vitamin K-dependent gamma-carboxyglutamate residues (By similarity).</text>
</comment>
<comment type="disruption phenotype">
    <text evidence="9">Reduced amount of collagen cross-linking in femur and periosteum (PubMed:20181949).</text>
</comment>
<keyword id="KW-0025">Alternative splicing</keyword>
<keyword id="KW-0130">Cell adhesion</keyword>
<keyword id="KW-1015">Disulfide bond</keyword>
<keyword id="KW-0272">Extracellular matrix</keyword>
<keyword id="KW-0301">Gamma-carboxyglutamic acid</keyword>
<keyword id="KW-0325">Glycoprotein</keyword>
<keyword id="KW-0333">Golgi apparatus</keyword>
<keyword id="KW-0358">Heparin-binding</keyword>
<keyword id="KW-1185">Reference proteome</keyword>
<keyword id="KW-0677">Repeat</keyword>
<keyword id="KW-0964">Secreted</keyword>
<keyword id="KW-0732">Signal</keyword>
<organism>
    <name type="scientific">Mus musculus</name>
    <name type="common">Mouse</name>
    <dbReference type="NCBI Taxonomy" id="10090"/>
    <lineage>
        <taxon>Eukaryota</taxon>
        <taxon>Metazoa</taxon>
        <taxon>Chordata</taxon>
        <taxon>Craniata</taxon>
        <taxon>Vertebrata</taxon>
        <taxon>Euteleostomi</taxon>
        <taxon>Mammalia</taxon>
        <taxon>Eutheria</taxon>
        <taxon>Euarchontoglires</taxon>
        <taxon>Glires</taxon>
        <taxon>Rodentia</taxon>
        <taxon>Myomorpha</taxon>
        <taxon>Muroidea</taxon>
        <taxon>Muridae</taxon>
        <taxon>Murinae</taxon>
        <taxon>Mus</taxon>
        <taxon>Mus</taxon>
    </lineage>
</organism>
<accession>Q62009</accession>
<accession>Q8BMJ6</accession>
<accession>Q8K1K0</accession>
<proteinExistence type="evidence at protein level"/>
<sequence length="838" mass="93144">MVPLLPLYALLLLFLCDINPANANSYYDKVLAHSRIRGRDQGPNVCALQQILGTKKKYFSSCKNWYQGAICGKKTTVLYECCPGYMRMEGMKGCPAVMPIDHVYGTLGIVGATTTQHYSDVSKLREEIEGKGSYTYFAPSNEAWENLDSDIRRGLENNVNVELLNALHSHMVNKRMLTKDLKHGMVIPSMYNNLGLFINHYPNGVVTVNCARVIHGNQIATNGVVHVIDRVLTQIGTSIQDFLEAEDDLSSFRAAAITSDLLESLGRDGHFTLFAPTNEAFEKLPRGVLERIMGDKVASEALMKYHILNTLQCSEAITGGAVFETMEGNTIEIGCEGDSISINGIKMVNKKDIVTKNGVIHLIDEVLIPDSAKQVIELAGKQQTTFTDLVAQLGLASSLKPDGEYTLLAPVNNAFSDDTLSMDQRLLKLILQNHILKVKVGLSDLYNGQILETIGGKQLRVFVYRTAICIENSCMVRGSKQGRNGAIHIFREIIQPAEKSLHDKLRQDKRFSIFLSLLEAADLKDLLTQPGDWTLFAPTNDAFKGMTSEERELLIGDKNALQNIILYHLTPGVYIGKGFEPGVTNILKTTQGSKIYLKGVNETLLVNELKSKESDIMTTNGVIHVVDKLLYPADIPVGNDQLLELLNKLIKYIQIKFVRGSTFKEIPMTVYTTKIITKVVEPKIKVIQGSLQPIIKTEGPAMTKIQIEGDPDFRLIKEGETVTEVIHGEPVIKKYTKIIDGVPVEITEKQTREERIITGPEIKYTRISTGGGETGETLQKFLQKEVSKVTKFIEGGDGHLFEDEEIKRLLQGDTPAKKIPANKRVQGPRRRSREGRSQ</sequence>